<gene>
    <name type="primary">CACNA2D1</name>
    <name type="synonym">CACNL2A</name>
    <name type="synonym">CCHL2A</name>
</gene>
<organism>
    <name type="scientific">Oryctolagus cuniculus</name>
    <name type="common">Rabbit</name>
    <dbReference type="NCBI Taxonomy" id="9986"/>
    <lineage>
        <taxon>Eukaryota</taxon>
        <taxon>Metazoa</taxon>
        <taxon>Chordata</taxon>
        <taxon>Craniata</taxon>
        <taxon>Vertebrata</taxon>
        <taxon>Euteleostomi</taxon>
        <taxon>Mammalia</taxon>
        <taxon>Eutheria</taxon>
        <taxon>Euarchontoglires</taxon>
        <taxon>Glires</taxon>
        <taxon>Lagomorpha</taxon>
        <taxon>Leporidae</taxon>
        <taxon>Oryctolagus</taxon>
    </lineage>
</organism>
<accession>P13806</accession>
<keyword id="KW-0002">3D-structure</keyword>
<keyword id="KW-0025">Alternative splicing</keyword>
<keyword id="KW-0106">Calcium</keyword>
<keyword id="KW-0107">Calcium channel</keyword>
<keyword id="KW-0109">Calcium transport</keyword>
<keyword id="KW-1003">Cell membrane</keyword>
<keyword id="KW-0903">Direct protein sequencing</keyword>
<keyword id="KW-1015">Disulfide bond</keyword>
<keyword id="KW-0325">Glycoprotein</keyword>
<keyword id="KW-0407">Ion channel</keyword>
<keyword id="KW-0406">Ion transport</keyword>
<keyword id="KW-0472">Membrane</keyword>
<keyword id="KW-0479">Metal-binding</keyword>
<keyword id="KW-0597">Phosphoprotein</keyword>
<keyword id="KW-1185">Reference proteome</keyword>
<keyword id="KW-0732">Signal</keyword>
<keyword id="KW-0812">Transmembrane</keyword>
<keyword id="KW-1133">Transmembrane helix</keyword>
<keyword id="KW-0813">Transport</keyword>
<keyword id="KW-0851">Voltage-gated channel</keyword>
<evidence type="ECO:0000250" key="1"/>
<evidence type="ECO:0000250" key="2">
    <source>
        <dbReference type="UniProtKB" id="P54289"/>
    </source>
</evidence>
<evidence type="ECO:0000250" key="3">
    <source>
        <dbReference type="UniProtKB" id="P54290"/>
    </source>
</evidence>
<evidence type="ECO:0000255" key="4"/>
<evidence type="ECO:0000255" key="5">
    <source>
        <dbReference type="PROSITE-ProRule" id="PRU00219"/>
    </source>
</evidence>
<evidence type="ECO:0000269" key="6">
    <source>
    </source>
</evidence>
<evidence type="ECO:0000269" key="7">
    <source>
    </source>
</evidence>
<evidence type="ECO:0000305" key="8"/>
<evidence type="ECO:0007829" key="9">
    <source>
        <dbReference type="PDB" id="6JPA"/>
    </source>
</evidence>
<evidence type="ECO:0007829" key="10">
    <source>
        <dbReference type="PDB" id="7JPK"/>
    </source>
</evidence>
<evidence type="ECO:0007829" key="11">
    <source>
        <dbReference type="PDB" id="7JPX"/>
    </source>
</evidence>
<evidence type="ECO:0007829" key="12">
    <source>
        <dbReference type="PDB" id="8E56"/>
    </source>
</evidence>
<evidence type="ECO:0007829" key="13">
    <source>
        <dbReference type="PDB" id="8E57"/>
    </source>
</evidence>
<evidence type="ECO:0007829" key="14">
    <source>
        <dbReference type="PDB" id="8E58"/>
    </source>
</evidence>
<evidence type="ECO:0007829" key="15">
    <source>
        <dbReference type="PDB" id="8EOG"/>
    </source>
</evidence>
<evidence type="ECO:0007829" key="16">
    <source>
        <dbReference type="PDB" id="8FD7"/>
    </source>
</evidence>
<feature type="signal peptide" evidence="7">
    <location>
        <begin position="1"/>
        <end position="26"/>
    </location>
</feature>
<feature type="chain" id="PRO_0000304636" description="Voltage-dependent calcium channel subunit alpha-2/delta-1">
    <location>
        <begin position="27"/>
        <end position="1106"/>
    </location>
</feature>
<feature type="chain" id="PRO_0000005007" description="Voltage-dependent calcium channel subunit alpha-2-1">
    <location>
        <begin position="27"/>
        <end position="960"/>
    </location>
</feature>
<feature type="chain" id="PRO_0000005008" description="Voltage-dependent calcium channel subunit delta-1">
    <location>
        <begin position="961"/>
        <end position="1106"/>
    </location>
</feature>
<feature type="topological domain" description="Extracellular" evidence="4">
    <location>
        <begin position="27"/>
        <end position="1076"/>
    </location>
</feature>
<feature type="transmembrane region" description="Helical" evidence="4">
    <location>
        <begin position="1077"/>
        <end position="1097"/>
    </location>
</feature>
<feature type="topological domain" description="Cytoplasmic" evidence="4">
    <location>
        <begin position="1098"/>
        <end position="1106"/>
    </location>
</feature>
<feature type="domain" description="VWFA" evidence="5">
    <location>
        <begin position="255"/>
        <end position="432"/>
    </location>
</feature>
<feature type="domain" description="Cache">
    <location>
        <begin position="448"/>
        <end position="539"/>
    </location>
</feature>
<feature type="short sequence motif" description="MIDAS-like motif">
    <location>
        <begin position="261"/>
        <end position="265"/>
    </location>
</feature>
<feature type="binding site" evidence="1">
    <location>
        <position position="261"/>
    </location>
    <ligand>
        <name>a divalent metal cation</name>
        <dbReference type="ChEBI" id="CHEBI:60240"/>
    </ligand>
</feature>
<feature type="binding site" evidence="1">
    <location>
        <position position="263"/>
    </location>
    <ligand>
        <name>a divalent metal cation</name>
        <dbReference type="ChEBI" id="CHEBI:60240"/>
    </ligand>
</feature>
<feature type="binding site" evidence="1">
    <location>
        <position position="265"/>
    </location>
    <ligand>
        <name>a divalent metal cation</name>
        <dbReference type="ChEBI" id="CHEBI:60240"/>
    </ligand>
</feature>
<feature type="modified residue" description="Phosphoserine" evidence="3">
    <location>
        <position position="121"/>
    </location>
</feature>
<feature type="glycosylation site" description="N-linked (GlcNAc...) asparagine" evidence="4">
    <location>
        <position position="94"/>
    </location>
</feature>
<feature type="glycosylation site" description="N-linked (GlcNAc...) asparagine" evidence="4">
    <location>
        <position position="138"/>
    </location>
</feature>
<feature type="glycosylation site" description="N-linked (GlcNAc...) asparagine" evidence="4">
    <location>
        <position position="186"/>
    </location>
</feature>
<feature type="glycosylation site" description="N-linked (GlcNAc...) asparagine" evidence="4">
    <location>
        <position position="326"/>
    </location>
</feature>
<feature type="glycosylation site" description="N-linked (GlcNAc...) asparagine" evidence="4">
    <location>
        <position position="350"/>
    </location>
</feature>
<feature type="glycosylation site" description="N-linked (GlcNAc...) asparagine" evidence="4">
    <location>
        <position position="615"/>
    </location>
</feature>
<feature type="glycosylation site" description="N-linked (GlcNAc...) asparagine" evidence="4">
    <location>
        <position position="784"/>
    </location>
</feature>
<feature type="glycosylation site" description="N-linked (GlcNAc...) asparagine" evidence="4">
    <location>
        <position position="891"/>
    </location>
</feature>
<feature type="disulfide bond" description="Interchain (between alpha-2-1 and delta-1 chains)" evidence="1">
    <location>
        <begin position="406"/>
        <end position="1062"/>
    </location>
</feature>
<feature type="sequence conflict" description="In Ref. 2; AA sequence." evidence="8" ref="2">
    <original>D</original>
    <variation>S</variation>
    <location>
        <position position="45"/>
    </location>
</feature>
<feature type="helix" evidence="9">
    <location>
        <begin position="32"/>
        <end position="39"/>
    </location>
</feature>
<feature type="turn" evidence="9">
    <location>
        <begin position="40"/>
        <end position="42"/>
    </location>
</feature>
<feature type="helix" evidence="9">
    <location>
        <begin position="44"/>
        <end position="54"/>
    </location>
</feature>
<feature type="helix" evidence="9">
    <location>
        <begin position="56"/>
        <end position="66"/>
    </location>
</feature>
<feature type="strand" evidence="9">
    <location>
        <begin position="67"/>
        <end position="74"/>
    </location>
</feature>
<feature type="helix" evidence="9">
    <location>
        <begin position="79"/>
        <end position="110"/>
    </location>
</feature>
<feature type="turn" evidence="9">
    <location>
        <begin position="119"/>
        <end position="121"/>
    </location>
</feature>
<feature type="strand" evidence="16">
    <location>
        <begin position="124"/>
        <end position="126"/>
    </location>
</feature>
<feature type="strand" evidence="9">
    <location>
        <begin position="127"/>
        <end position="131"/>
    </location>
</feature>
<feature type="helix" evidence="13">
    <location>
        <begin position="135"/>
        <end position="137"/>
    </location>
</feature>
<feature type="strand" evidence="11">
    <location>
        <begin position="144"/>
        <end position="146"/>
    </location>
</feature>
<feature type="strand" evidence="12">
    <location>
        <begin position="152"/>
        <end position="154"/>
    </location>
</feature>
<feature type="strand" evidence="9">
    <location>
        <begin position="155"/>
        <end position="159"/>
    </location>
</feature>
<feature type="strand" evidence="9">
    <location>
        <begin position="161"/>
        <end position="165"/>
    </location>
</feature>
<feature type="strand" evidence="9">
    <location>
        <begin position="167"/>
        <end position="169"/>
    </location>
</feature>
<feature type="strand" evidence="9">
    <location>
        <begin position="172"/>
        <end position="174"/>
    </location>
</feature>
<feature type="helix" evidence="9">
    <location>
        <begin position="179"/>
        <end position="187"/>
    </location>
</feature>
<feature type="helix" evidence="9">
    <location>
        <begin position="188"/>
        <end position="191"/>
    </location>
</feature>
<feature type="helix" evidence="9">
    <location>
        <begin position="192"/>
        <end position="201"/>
    </location>
</feature>
<feature type="strand" evidence="9">
    <location>
        <begin position="208"/>
        <end position="212"/>
    </location>
</feature>
<feature type="strand" evidence="9">
    <location>
        <begin position="217"/>
        <end position="222"/>
    </location>
</feature>
<feature type="strand" evidence="9">
    <location>
        <begin position="229"/>
        <end position="233"/>
    </location>
</feature>
<feature type="turn" evidence="9">
    <location>
        <begin position="240"/>
        <end position="242"/>
    </location>
</feature>
<feature type="helix" evidence="9">
    <location>
        <begin position="244"/>
        <end position="250"/>
    </location>
</feature>
<feature type="strand" evidence="9">
    <location>
        <begin position="254"/>
        <end position="261"/>
    </location>
</feature>
<feature type="helix" evidence="9">
    <location>
        <begin position="264"/>
        <end position="266"/>
    </location>
</feature>
<feature type="helix" evidence="9">
    <location>
        <begin position="269"/>
        <end position="283"/>
    </location>
</feature>
<feature type="strand" evidence="9">
    <location>
        <begin position="289"/>
        <end position="305"/>
    </location>
</feature>
<feature type="helix" evidence="9">
    <location>
        <begin position="314"/>
        <end position="323"/>
    </location>
</feature>
<feature type="helix" evidence="9">
    <location>
        <begin position="337"/>
        <end position="346"/>
    </location>
</feature>
<feature type="strand" evidence="15">
    <location>
        <begin position="350"/>
        <end position="352"/>
    </location>
</feature>
<feature type="strand" evidence="9">
    <location>
        <begin position="356"/>
        <end position="365"/>
    </location>
</feature>
<feature type="helix" evidence="9">
    <location>
        <begin position="372"/>
        <end position="378"/>
    </location>
</feature>
<feature type="turn" evidence="9">
    <location>
        <begin position="379"/>
        <end position="381"/>
    </location>
</feature>
<feature type="strand" evidence="9">
    <location>
        <begin position="384"/>
        <end position="393"/>
    </location>
</feature>
<feature type="helix" evidence="9">
    <location>
        <begin position="399"/>
        <end position="407"/>
    </location>
</feature>
<feature type="strand" evidence="9">
    <location>
        <begin position="411"/>
        <end position="415"/>
    </location>
</feature>
<feature type="helix" evidence="9">
    <location>
        <begin position="418"/>
        <end position="420"/>
    </location>
</feature>
<feature type="turn" evidence="9">
    <location>
        <begin position="421"/>
        <end position="424"/>
    </location>
</feature>
<feature type="turn" evidence="14">
    <location>
        <begin position="425"/>
        <end position="428"/>
    </location>
</feature>
<feature type="helix" evidence="9">
    <location>
        <begin position="429"/>
        <end position="432"/>
    </location>
</feature>
<feature type="helix" evidence="9">
    <location>
        <begin position="434"/>
        <end position="437"/>
    </location>
</feature>
<feature type="helix" evidence="9">
    <location>
        <begin position="440"/>
        <end position="443"/>
    </location>
</feature>
<feature type="strand" evidence="9">
    <location>
        <begin position="460"/>
        <end position="469"/>
    </location>
</feature>
<feature type="turn" evidence="9">
    <location>
        <begin position="474"/>
        <end position="477"/>
    </location>
</feature>
<feature type="helix" evidence="13">
    <location>
        <begin position="482"/>
        <end position="484"/>
    </location>
</feature>
<feature type="strand" evidence="9">
    <location>
        <begin position="485"/>
        <end position="495"/>
    </location>
</feature>
<feature type="helix" evidence="9">
    <location>
        <begin position="496"/>
        <end position="499"/>
    </location>
</feature>
<feature type="strand" evidence="9">
    <location>
        <begin position="506"/>
        <end position="508"/>
    </location>
</feature>
<feature type="strand" evidence="9">
    <location>
        <begin position="513"/>
        <end position="517"/>
    </location>
</feature>
<feature type="strand" evidence="9">
    <location>
        <begin position="521"/>
        <end position="525"/>
    </location>
</feature>
<feature type="helix" evidence="9">
    <location>
        <begin position="543"/>
        <end position="545"/>
    </location>
</feature>
<feature type="strand" evidence="14">
    <location>
        <begin position="548"/>
        <end position="550"/>
    </location>
</feature>
<feature type="helix" evidence="9">
    <location>
        <begin position="563"/>
        <end position="566"/>
    </location>
</feature>
<feature type="helix" evidence="9">
    <location>
        <begin position="574"/>
        <end position="579"/>
    </location>
</feature>
<feature type="turn" evidence="9">
    <location>
        <begin position="580"/>
        <end position="583"/>
    </location>
</feature>
<feature type="strand" evidence="9">
    <location>
        <begin position="586"/>
        <end position="595"/>
    </location>
</feature>
<feature type="strand" evidence="9">
    <location>
        <begin position="602"/>
        <end position="613"/>
    </location>
</feature>
<feature type="strand" evidence="12">
    <location>
        <begin position="615"/>
        <end position="618"/>
    </location>
</feature>
<feature type="strand" evidence="9">
    <location>
        <begin position="622"/>
        <end position="627"/>
    </location>
</feature>
<feature type="helix" evidence="12">
    <location>
        <begin position="628"/>
        <end position="630"/>
    </location>
</feature>
<feature type="strand" evidence="9">
    <location>
        <begin position="631"/>
        <end position="636"/>
    </location>
</feature>
<feature type="helix" evidence="9">
    <location>
        <begin position="641"/>
        <end position="646"/>
    </location>
</feature>
<feature type="helix" evidence="9">
    <location>
        <begin position="653"/>
        <end position="655"/>
    </location>
</feature>
<feature type="strand" evidence="9">
    <location>
        <begin position="657"/>
        <end position="659"/>
    </location>
</feature>
<feature type="strand" evidence="12">
    <location>
        <begin position="661"/>
        <end position="664"/>
    </location>
</feature>
<feature type="strand" evidence="9">
    <location>
        <begin position="670"/>
        <end position="673"/>
    </location>
</feature>
<feature type="helix" evidence="9">
    <location>
        <begin position="679"/>
        <end position="692"/>
    </location>
</feature>
<feature type="strand" evidence="13">
    <location>
        <begin position="698"/>
        <end position="700"/>
    </location>
</feature>
<feature type="helix" evidence="9">
    <location>
        <begin position="702"/>
        <end position="712"/>
    </location>
</feature>
<feature type="helix" evidence="9">
    <location>
        <begin position="714"/>
        <end position="721"/>
    </location>
</feature>
<feature type="turn" evidence="9">
    <location>
        <begin position="722"/>
        <end position="725"/>
    </location>
</feature>
<feature type="strand" evidence="9">
    <location>
        <begin position="730"/>
        <end position="734"/>
    </location>
</feature>
<feature type="strand" evidence="9">
    <location>
        <begin position="737"/>
        <end position="739"/>
    </location>
</feature>
<feature type="helix" evidence="13">
    <location>
        <begin position="740"/>
        <end position="742"/>
    </location>
</feature>
<feature type="strand" evidence="9">
    <location>
        <begin position="745"/>
        <end position="748"/>
    </location>
</feature>
<feature type="helix" evidence="9">
    <location>
        <begin position="751"/>
        <end position="753"/>
    </location>
</feature>
<feature type="turn" evidence="9">
    <location>
        <begin position="761"/>
        <end position="763"/>
    </location>
</feature>
<feature type="helix" evidence="9">
    <location>
        <begin position="765"/>
        <end position="772"/>
    </location>
</feature>
<feature type="strand" evidence="9">
    <location>
        <begin position="774"/>
        <end position="779"/>
    </location>
</feature>
<feature type="strand" evidence="12">
    <location>
        <begin position="786"/>
        <end position="788"/>
    </location>
</feature>
<feature type="turn" evidence="9">
    <location>
        <begin position="791"/>
        <end position="793"/>
    </location>
</feature>
<feature type="strand" evidence="9">
    <location>
        <begin position="796"/>
        <end position="800"/>
    </location>
</feature>
<feature type="strand" evidence="9">
    <location>
        <begin position="803"/>
        <end position="807"/>
    </location>
</feature>
<feature type="strand" evidence="9">
    <location>
        <begin position="813"/>
        <end position="819"/>
    </location>
</feature>
<feature type="helix" evidence="9">
    <location>
        <begin position="821"/>
        <end position="829"/>
    </location>
</feature>
<feature type="strand" evidence="9">
    <location>
        <begin position="849"/>
        <end position="856"/>
    </location>
</feature>
<feature type="strand" evidence="9">
    <location>
        <begin position="860"/>
        <end position="870"/>
    </location>
</feature>
<feature type="strand" evidence="12">
    <location>
        <begin position="875"/>
        <end position="877"/>
    </location>
</feature>
<feature type="helix" evidence="9">
    <location>
        <begin position="878"/>
        <end position="880"/>
    </location>
</feature>
<feature type="helix" evidence="9">
    <location>
        <begin position="883"/>
        <end position="891"/>
    </location>
</feature>
<feature type="strand" evidence="9">
    <location>
        <begin position="896"/>
        <end position="907"/>
    </location>
</feature>
<feature type="strand" evidence="9">
    <location>
        <begin position="975"/>
        <end position="985"/>
    </location>
</feature>
<feature type="strand" evidence="9">
    <location>
        <begin position="991"/>
        <end position="994"/>
    </location>
</feature>
<feature type="strand" evidence="9">
    <location>
        <begin position="997"/>
        <end position="1001"/>
    </location>
</feature>
<feature type="strand" evidence="16">
    <location>
        <begin position="1004"/>
        <end position="1006"/>
    </location>
</feature>
<feature type="strand" evidence="9">
    <location>
        <begin position="1007"/>
        <end position="1010"/>
    </location>
</feature>
<feature type="turn" evidence="10">
    <location>
        <begin position="1012"/>
        <end position="1015"/>
    </location>
</feature>
<feature type="strand" evidence="9">
    <location>
        <begin position="1017"/>
        <end position="1022"/>
    </location>
</feature>
<feature type="helix" evidence="9">
    <location>
        <begin position="1024"/>
        <end position="1026"/>
    </location>
</feature>
<feature type="strand" evidence="12">
    <location>
        <begin position="1039"/>
        <end position="1041"/>
    </location>
</feature>
<feature type="helix" evidence="9">
    <location>
        <begin position="1046"/>
        <end position="1049"/>
    </location>
</feature>
<feature type="strand" evidence="16">
    <location>
        <begin position="1075"/>
        <end position="1077"/>
    </location>
</feature>
<comment type="function">
    <text evidence="2">The alpha-2/delta subunit of voltage-dependent calcium channels regulates calcium current density and activation/inactivation kinetics of the calcium channel (By similarity). Plays an important role in excitation-contraction coupling (By similarity).</text>
</comment>
<comment type="subunit">
    <text evidence="6">Dimer formed of alpha-2-1 and delta-1 chains; disulfide-linked. Voltage-dependent calcium channels are multisubunit complexes, consisting of alpha-1 (CACNA1), alpha-2 (CACNA2D), beta (CACNB) and delta (CACNA2D) subunits in a 1:1:1:1 ratio.</text>
</comment>
<comment type="interaction">
    <interactant intactId="EBI-9683767">
        <id>P13806</id>
    </interactant>
    <interactant intactId="EBI-8613624">
        <id>P07293</id>
        <label>CACNA1S</label>
    </interactant>
    <organismsDiffer>false</organismsDiffer>
    <experiments>3</experiments>
</comment>
<comment type="subcellular location">
    <subcellularLocation>
        <location evidence="8">Membrane</location>
        <topology evidence="8">Single-pass type I membrane protein</topology>
    </subcellularLocation>
    <subcellularLocation>
        <location evidence="2">Cell membrane</location>
    </subcellularLocation>
</comment>
<comment type="alternative products">
    <event type="alternative splicing"/>
    <isoform>
        <id>P13806-1</id>
        <name>1</name>
        <sequence type="displayed"/>
    </isoform>
    <text>2 isoforms are produced.</text>
</comment>
<comment type="tissue specificity">
    <text>Skeletal muscle.</text>
</comment>
<comment type="domain">
    <text evidence="1">The MIDAS-like motif in the VWFA domain binds divalent metal cations and is required to promote trafficking of the alpha-1 (CACNA1) subunit to the plasma membrane by an integrin-like switch.</text>
</comment>
<comment type="PTM">
    <text evidence="6">Proteolytically processed into subunits alpha-2-1 and delta-1 that are disulfide-linked.</text>
</comment>
<comment type="miscellaneous">
    <text evidence="1">Binds gabapentin, an antiepileptic drug.</text>
</comment>
<comment type="similarity">
    <text evidence="8">Belongs to the calcium channel subunit alpha-2/delta family.</text>
</comment>
<reference key="1">
    <citation type="journal article" date="1988" name="Science">
        <title>Sequence and expression of mRNAs encoding the alpha 1 and alpha 2 subunits of a DHP-sensitive calcium channel.</title>
        <authorList>
            <person name="Ellis S.B."/>
            <person name="Williams M.E."/>
            <person name="Ways N.R."/>
            <person name="Brenner R."/>
            <person name="Sharp A.H."/>
            <person name="Leung A.T."/>
            <person name="Campbell K.P."/>
            <person name="McKenna E."/>
            <person name="Koch W.J."/>
            <person name="Hui A."/>
            <person name="Schwartz A."/>
            <person name="Harpold M.M."/>
        </authorList>
    </citation>
    <scope>NUCLEOTIDE SEQUENCE [MRNA]</scope>
</reference>
<reference key="2">
    <citation type="journal article" date="1989" name="Biochemistry">
        <title>Subunit composition of the purified dihydropyridine binding protein from skeletal muscle.</title>
        <authorList>
            <person name="Hamilton S.L."/>
            <person name="Hawkes M.J."/>
            <person name="Brush K."/>
            <person name="Cook R."/>
            <person name="Chang R.J."/>
            <person name="Smilowitz H.M."/>
        </authorList>
    </citation>
    <scope>PROTEIN SEQUENCE OF 27-47</scope>
</reference>
<reference key="3">
    <citation type="journal article" date="1991" name="J. Biol. Chem.">
        <title>Structural characterization of the dihydropyridine-sensitive calcium channel alpha 2-subunit and the associated delta peptides.</title>
        <authorList>
            <person name="Jay S.D."/>
            <person name="Sharp A.H."/>
            <person name="Kahl S.D."/>
            <person name="Vedvick T.S."/>
            <person name="Harpold M.M."/>
            <person name="Campbell K.P."/>
        </authorList>
    </citation>
    <scope>PROTEIN SEQUENCE OF 961-973</scope>
</reference>
<reference key="4">
    <citation type="journal article" date="1990" name="J. Biol. Chem.">
        <title>Subunits of purified calcium channels. Alpha 2 and delta are encoded by the same gene.</title>
        <authorList>
            <person name="de Jongh K.S."/>
            <person name="Warner C."/>
            <person name="Catterall W.A."/>
        </authorList>
    </citation>
    <scope>PROTEIN SEQUENCE OF 961-975; 992-1000 AND 1033-1050</scope>
    <scope>PROTEOLYTIC PROCESSING</scope>
    <scope>SUBUNIT</scope>
</reference>
<sequence>MAAGRPLAWTLTLWQAWLILIGPSSEEPFPSAVTIKSWVDKMQEDLVTLAKTASGVHQLVDIYEKYQDLYTVEPNNARQLVEIAARDIEKLLSNRSKALVRLALEAEKVQAAHQWREDFASNEVVYYNAKDDLDPEKNDSEPGSQRIKPVFIDDANFRRQVSYQHAAVHIPTDIYEGSTIVLNELNWTSALDDVFKKNREEDPSLLWQVFGSATGLARYYPASPWVDNSRTPNKIDLYDVRRRPWYIQGAASPKDMLILVDVSGSVSGLTLKLIRTSVSEMLETLSDDDFVNVASFNSNAQDVSCFQHLVQANVRNKKVLKDAVNNITAKGITDYKKGFSFAFEQLLNYNVSRANCNKIIMLFTDGGEERAQEIFAKYNKDKKVRVFTFSVGQHNYDRGPIQWMACENKGYYYEIPSIGAIRINTQEYLDVLGRPMVLAGDKAKQVQWTNVYLDALELGLVITGTLPVFNITGQFENKTNLKNQLILGVMGVDVSLEDIKRLTPRFTLCPNGYYFAIDPNGYVLLHPNLQPKPIGVGIPTINLRKRRPNVQNPKSQEPVTLDFLDAELENDIKVEIRNKMIDGESGEKTFRTLVKSQDERYIDKGNRTYTWTPVNGTDYSSLALVLPTYSFYYIKAKIEETITQARYSETLKPDNFEESGYTFLAPRDYCSDLKPSDNNTEFLLNFNEFIDRKTPNNPSCNTDLINRVLLDAGFTNELVQNYWSKQKNIKGVKARFVVTDGGITRVYPKEAGENWQENPETYEDSFYKRSLDNDNYVFTAPYFNKSGPGAYESGIMVSKAVEIYIQGKLLKPAVVGIKIDVNSWIENFTKTSIRDPCAGPVCDCKRNSDVMDCVILDDGGFLLMANHDDYTNQIGRFFGEIDPSLMRHLVNISVYAFNKSYDYQSVCEPGAAPKQGAGHRSAYVPSIADILQIGWWATAAAWSILQQFLLSLTFPRLLEAADMEDDDFTASMSKQSCITEQTQYFFDNDSKSFSGVLDCGNCSRIFHVEKLMNTNLIFIMVESKGTCPCDTRLLIQAEQTSDGPDPCDMVKQPRYRKGPDVCFDNNVLEDYTDCGGVSGLNPSLWSIIGIQFVLLWLVSGSRHCLL</sequence>
<dbReference type="EMBL" id="M21948">
    <property type="protein sequence ID" value="AAA81562.1"/>
    <property type="molecule type" value="mRNA"/>
</dbReference>
<dbReference type="PIR" id="S10579">
    <property type="entry name" value="CHRBA2"/>
</dbReference>
<dbReference type="RefSeq" id="NP_001075745.1">
    <molecule id="P13806-1"/>
    <property type="nucleotide sequence ID" value="NM_001082276.1"/>
</dbReference>
<dbReference type="PDB" id="3JBR">
    <property type="method" value="EM"/>
    <property type="resolution" value="4.20 A"/>
    <property type="chains" value="F=1-39, F=56-661, F=956-1106"/>
</dbReference>
<dbReference type="PDB" id="5GJV">
    <property type="method" value="EM"/>
    <property type="resolution" value="3.60 A"/>
    <property type="chains" value="F=1-1106"/>
</dbReference>
<dbReference type="PDB" id="5GJW">
    <property type="method" value="EM"/>
    <property type="resolution" value="3.90 A"/>
    <property type="chains" value="F=1-1106"/>
</dbReference>
<dbReference type="PDB" id="6JP5">
    <property type="method" value="EM"/>
    <property type="resolution" value="2.90 A"/>
    <property type="chains" value="F=1-1074"/>
</dbReference>
<dbReference type="PDB" id="6JP8">
    <property type="method" value="EM"/>
    <property type="resolution" value="2.70 A"/>
    <property type="chains" value="F=29-1075"/>
</dbReference>
<dbReference type="PDB" id="6JPA">
    <property type="method" value="EM"/>
    <property type="resolution" value="2.60 A"/>
    <property type="chains" value="F=29-1075"/>
</dbReference>
<dbReference type="PDB" id="6JPB">
    <property type="method" value="EM"/>
    <property type="resolution" value="2.90 A"/>
    <property type="chains" value="F=29-1075"/>
</dbReference>
<dbReference type="PDB" id="7JPK">
    <property type="method" value="EM"/>
    <property type="resolution" value="3.00 A"/>
    <property type="chains" value="F=1-1106"/>
</dbReference>
<dbReference type="PDB" id="7JPL">
    <property type="method" value="EM"/>
    <property type="resolution" value="3.40 A"/>
    <property type="chains" value="F=1-1106"/>
</dbReference>
<dbReference type="PDB" id="7JPV">
    <property type="method" value="EM"/>
    <property type="resolution" value="3.40 A"/>
    <property type="chains" value="F=1-1106"/>
</dbReference>
<dbReference type="PDB" id="7JPW">
    <property type="method" value="EM"/>
    <property type="resolution" value="3.20 A"/>
    <property type="chains" value="F=1-1106"/>
</dbReference>
<dbReference type="PDB" id="7JPX">
    <property type="method" value="EM"/>
    <property type="resolution" value="2.90 A"/>
    <property type="chains" value="F=1-1106"/>
</dbReference>
<dbReference type="PDB" id="8E56">
    <property type="method" value="EM"/>
    <property type="resolution" value="2.80 A"/>
    <property type="chains" value="F=1-1106"/>
</dbReference>
<dbReference type="PDB" id="8E57">
    <property type="method" value="EM"/>
    <property type="resolution" value="2.80 A"/>
    <property type="chains" value="F=1-1106"/>
</dbReference>
<dbReference type="PDB" id="8E58">
    <property type="method" value="EM"/>
    <property type="resolution" value="3.00 A"/>
    <property type="chains" value="F=1-1106"/>
</dbReference>
<dbReference type="PDB" id="8EOG">
    <property type="method" value="EM"/>
    <property type="resolution" value="3.30 A"/>
    <property type="chains" value="D=29-1079"/>
</dbReference>
<dbReference type="PDB" id="8FD7">
    <property type="method" value="EM"/>
    <property type="resolution" value="3.10 A"/>
    <property type="chains" value="D=1-1106"/>
</dbReference>
<dbReference type="PDBsum" id="3JBR"/>
<dbReference type="PDBsum" id="5GJV"/>
<dbReference type="PDBsum" id="5GJW"/>
<dbReference type="PDBsum" id="6JP5"/>
<dbReference type="PDBsum" id="6JP8"/>
<dbReference type="PDBsum" id="6JPA"/>
<dbReference type="PDBsum" id="6JPB"/>
<dbReference type="PDBsum" id="7JPK"/>
<dbReference type="PDBsum" id="7JPL"/>
<dbReference type="PDBsum" id="7JPV"/>
<dbReference type="PDBsum" id="7JPW"/>
<dbReference type="PDBsum" id="7JPX"/>
<dbReference type="PDBsum" id="8E56"/>
<dbReference type="PDBsum" id="8E57"/>
<dbReference type="PDBsum" id="8E58"/>
<dbReference type="PDBsum" id="8EOG"/>
<dbReference type="PDBsum" id="8FD7"/>
<dbReference type="EMDB" id="EMD-22414"/>
<dbReference type="EMDB" id="EMD-22415"/>
<dbReference type="EMDB" id="EMD-22424"/>
<dbReference type="EMDB" id="EMD-22425"/>
<dbReference type="EMDB" id="EMD-22426"/>
<dbReference type="EMDB" id="EMD-27904"/>
<dbReference type="EMDB" id="EMD-27905"/>
<dbReference type="EMDB" id="EMD-27906"/>
<dbReference type="EMDB" id="EMD-28375"/>
<dbReference type="EMDB" id="EMD-29004"/>
<dbReference type="EMDB" id="EMD-6475"/>
<dbReference type="EMDB" id="EMD-6476"/>
<dbReference type="EMDB" id="EMD-9513"/>
<dbReference type="EMDB" id="EMD-9515"/>
<dbReference type="EMDB" id="EMD-9866"/>
<dbReference type="EMDB" id="EMD-9867"/>
<dbReference type="EMDB" id="EMD-9868"/>
<dbReference type="EMDB" id="EMD-9869"/>
<dbReference type="SMR" id="P13806"/>
<dbReference type="ComplexPortal" id="CPX-3189">
    <property type="entry name" value="Cav1.1 voltage-gated calcium channel complex, CACNA2D1-CACNB1-CACNG1 variant"/>
</dbReference>
<dbReference type="CORUM" id="P13806"/>
<dbReference type="DIP" id="DIP-61880N"/>
<dbReference type="FunCoup" id="P13806">
    <property type="interactions" value="59"/>
</dbReference>
<dbReference type="IntAct" id="P13806">
    <property type="interactions" value="3"/>
</dbReference>
<dbReference type="STRING" id="9986.ENSOCUP00000042916"/>
<dbReference type="GlyCosmos" id="P13806">
    <property type="glycosylation" value="8 sites, No reported glycans"/>
</dbReference>
<dbReference type="PaxDb" id="9986-ENSOCUP00000024431"/>
<dbReference type="GeneID" id="100009105"/>
<dbReference type="KEGG" id="ocu:100009105"/>
<dbReference type="CTD" id="781"/>
<dbReference type="eggNOG" id="KOG2353">
    <property type="taxonomic scope" value="Eukaryota"/>
</dbReference>
<dbReference type="InParanoid" id="P13806"/>
<dbReference type="OrthoDB" id="10054666at2759"/>
<dbReference type="Proteomes" id="UP000001811">
    <property type="component" value="Unplaced"/>
</dbReference>
<dbReference type="GO" id="GO:1990454">
    <property type="term" value="C:L-type voltage-gated calcium channel complex"/>
    <property type="evidence" value="ECO:0000314"/>
    <property type="project" value="UniProtKB"/>
</dbReference>
<dbReference type="GO" id="GO:0030315">
    <property type="term" value="C:T-tubule"/>
    <property type="evidence" value="ECO:0000314"/>
    <property type="project" value="UniProtKB"/>
</dbReference>
<dbReference type="GO" id="GO:0005246">
    <property type="term" value="F:calcium channel regulator activity"/>
    <property type="evidence" value="ECO:0000314"/>
    <property type="project" value="UniProtKB"/>
</dbReference>
<dbReference type="GO" id="GO:0046872">
    <property type="term" value="F:metal ion binding"/>
    <property type="evidence" value="ECO:0007669"/>
    <property type="project" value="UniProtKB-KW"/>
</dbReference>
<dbReference type="GO" id="GO:0005245">
    <property type="term" value="F:voltage-gated calcium channel activity"/>
    <property type="evidence" value="ECO:0007669"/>
    <property type="project" value="TreeGrafter"/>
</dbReference>
<dbReference type="GO" id="GO:0098703">
    <property type="term" value="P:calcium ion import across plasma membrane"/>
    <property type="evidence" value="ECO:0000314"/>
    <property type="project" value="BHF-UCL"/>
</dbReference>
<dbReference type="CDD" id="cd01463">
    <property type="entry name" value="vWA_VGCC_like"/>
    <property type="match status" value="1"/>
</dbReference>
<dbReference type="FunFam" id="3.30.450.20:FF:000014">
    <property type="entry name" value="voltage-dependent calcium channel subunit alpha-2/delta-1 isoform X1"/>
    <property type="match status" value="1"/>
</dbReference>
<dbReference type="FunFam" id="3.40.50.410:FF:000006">
    <property type="entry name" value="voltage-dependent calcium channel subunit alpha-2/delta-1 isoform X1"/>
    <property type="match status" value="1"/>
</dbReference>
<dbReference type="Gene3D" id="3.30.450.20">
    <property type="entry name" value="PAS domain"/>
    <property type="match status" value="1"/>
</dbReference>
<dbReference type="Gene3D" id="3.40.50.410">
    <property type="entry name" value="von Willebrand factor, type A domain"/>
    <property type="match status" value="1"/>
</dbReference>
<dbReference type="InterPro" id="IPR051173">
    <property type="entry name" value="Ca_channel_alpha-2/delta"/>
</dbReference>
<dbReference type="InterPro" id="IPR013680">
    <property type="entry name" value="VDCC_a2/dsu"/>
</dbReference>
<dbReference type="InterPro" id="IPR013608">
    <property type="entry name" value="VWA_N"/>
</dbReference>
<dbReference type="InterPro" id="IPR002035">
    <property type="entry name" value="VWF_A"/>
</dbReference>
<dbReference type="InterPro" id="IPR036465">
    <property type="entry name" value="vWFA_dom_sf"/>
</dbReference>
<dbReference type="PANTHER" id="PTHR10166">
    <property type="entry name" value="VOLTAGE-DEPENDENT CALCIUM CHANNEL SUBUNIT ALPHA-2/DELTA-RELATED"/>
    <property type="match status" value="1"/>
</dbReference>
<dbReference type="PANTHER" id="PTHR10166:SF6">
    <property type="entry name" value="VOLTAGE-DEPENDENT CALCIUM CHANNEL SUBUNIT ALPHA-2_DELTA-1"/>
    <property type="match status" value="1"/>
</dbReference>
<dbReference type="Pfam" id="PF08473">
    <property type="entry name" value="VGCC_alpha2"/>
    <property type="match status" value="1"/>
</dbReference>
<dbReference type="Pfam" id="PF00092">
    <property type="entry name" value="VWA"/>
    <property type="match status" value="1"/>
</dbReference>
<dbReference type="Pfam" id="PF08399">
    <property type="entry name" value="VWA_N"/>
    <property type="match status" value="1"/>
</dbReference>
<dbReference type="SMART" id="SM00327">
    <property type="entry name" value="VWA"/>
    <property type="match status" value="1"/>
</dbReference>
<dbReference type="SUPFAM" id="SSF53300">
    <property type="entry name" value="vWA-like"/>
    <property type="match status" value="1"/>
</dbReference>
<dbReference type="PROSITE" id="PS50234">
    <property type="entry name" value="VWFA"/>
    <property type="match status" value="1"/>
</dbReference>
<protein>
    <recommendedName>
        <fullName>Voltage-dependent calcium channel subunit alpha-2/delta-1</fullName>
    </recommendedName>
    <alternativeName>
        <fullName>Voltage-gated calcium channel subunit alpha-2/delta-1</fullName>
    </alternativeName>
    <component>
        <recommendedName>
            <fullName>Voltage-dependent calcium channel subunit alpha-2-1</fullName>
        </recommendedName>
    </component>
    <component>
        <recommendedName>
            <fullName>Voltage-dependent calcium channel subunit delta-1</fullName>
        </recommendedName>
    </component>
</protein>
<proteinExistence type="evidence at protein level"/>
<name>CA2D1_RABIT</name>